<dbReference type="EMBL" id="U81037">
    <property type="protein sequence ID" value="AAB47755.1"/>
    <property type="status" value="ALT_FRAME"/>
    <property type="molecule type" value="mRNA"/>
</dbReference>
<dbReference type="SMR" id="P97686"/>
<dbReference type="FunCoup" id="P97686">
    <property type="interactions" value="1828"/>
</dbReference>
<dbReference type="STRING" id="10116.ENSRNOP00000076330"/>
<dbReference type="GlyCosmos" id="P97686">
    <property type="glycosylation" value="16 sites, 17 glycans"/>
</dbReference>
<dbReference type="GlyGen" id="P97686">
    <property type="glycosylation" value="18 sites, 18 N-linked glycans (7 sites), 3 N-linked;o-linked glycans (3 sites)"/>
</dbReference>
<dbReference type="iPTMnet" id="P97686"/>
<dbReference type="PhosphoSitePlus" id="P97686"/>
<dbReference type="PaxDb" id="10116-ENSRNOP00000044341"/>
<dbReference type="ABCD" id="P97686">
    <property type="antibodies" value="1 sequenced antibody"/>
</dbReference>
<dbReference type="UCSC" id="RGD:3209">
    <molecule id="P97686-1"/>
    <property type="organism name" value="rat"/>
</dbReference>
<dbReference type="AGR" id="RGD:3209"/>
<dbReference type="RGD" id="3209">
    <property type="gene designation" value="Nrcam"/>
</dbReference>
<dbReference type="eggNOG" id="KOG3513">
    <property type="taxonomic scope" value="Eukaryota"/>
</dbReference>
<dbReference type="InParanoid" id="P97686"/>
<dbReference type="PhylomeDB" id="P97686"/>
<dbReference type="PRO" id="PR:P97686"/>
<dbReference type="Proteomes" id="UP000002494">
    <property type="component" value="Unplaced"/>
</dbReference>
<dbReference type="GO" id="GO:0030424">
    <property type="term" value="C:axon"/>
    <property type="evidence" value="ECO:0000314"/>
    <property type="project" value="RGD"/>
</dbReference>
<dbReference type="GO" id="GO:0043194">
    <property type="term" value="C:axon initial segment"/>
    <property type="evidence" value="ECO:0000314"/>
    <property type="project" value="BHF-UCL"/>
</dbReference>
<dbReference type="GO" id="GO:0005576">
    <property type="term" value="C:extracellular region"/>
    <property type="evidence" value="ECO:0007669"/>
    <property type="project" value="UniProtKB-SubCell"/>
</dbReference>
<dbReference type="GO" id="GO:0098978">
    <property type="term" value="C:glutamatergic synapse"/>
    <property type="evidence" value="ECO:0000266"/>
    <property type="project" value="RGD"/>
</dbReference>
<dbReference type="GO" id="GO:0033268">
    <property type="term" value="C:node of Ranvier"/>
    <property type="evidence" value="ECO:0000314"/>
    <property type="project" value="RGD"/>
</dbReference>
<dbReference type="GO" id="GO:0005886">
    <property type="term" value="C:plasma membrane"/>
    <property type="evidence" value="ECO:0000266"/>
    <property type="project" value="RGD"/>
</dbReference>
<dbReference type="GO" id="GO:0098839">
    <property type="term" value="C:postsynaptic density membrane"/>
    <property type="evidence" value="ECO:0000266"/>
    <property type="project" value="RGD"/>
</dbReference>
<dbReference type="GO" id="GO:0045211">
    <property type="term" value="C:postsynaptic membrane"/>
    <property type="evidence" value="ECO:0000266"/>
    <property type="project" value="RGD"/>
</dbReference>
<dbReference type="GO" id="GO:0045202">
    <property type="term" value="C:synapse"/>
    <property type="evidence" value="ECO:0000266"/>
    <property type="project" value="RGD"/>
</dbReference>
<dbReference type="GO" id="GO:0030506">
    <property type="term" value="F:ankyrin binding"/>
    <property type="evidence" value="ECO:0000250"/>
    <property type="project" value="UniProtKB"/>
</dbReference>
<dbReference type="GO" id="GO:0098632">
    <property type="term" value="F:cell-cell adhesion mediator activity"/>
    <property type="evidence" value="ECO:0000318"/>
    <property type="project" value="GO_Central"/>
</dbReference>
<dbReference type="GO" id="GO:0086080">
    <property type="term" value="F:protein binding involved in heterotypic cell-cell adhesion"/>
    <property type="evidence" value="ECO:0000266"/>
    <property type="project" value="RGD"/>
</dbReference>
<dbReference type="GO" id="GO:0001525">
    <property type="term" value="P:angiogenesis"/>
    <property type="evidence" value="ECO:0000266"/>
    <property type="project" value="RGD"/>
</dbReference>
<dbReference type="GO" id="GO:0007411">
    <property type="term" value="P:axon guidance"/>
    <property type="evidence" value="ECO:0000266"/>
    <property type="project" value="RGD"/>
</dbReference>
<dbReference type="GO" id="GO:0007155">
    <property type="term" value="P:cell adhesion"/>
    <property type="evidence" value="ECO:0000304"/>
    <property type="project" value="RGD"/>
</dbReference>
<dbReference type="GO" id="GO:0098609">
    <property type="term" value="P:cell-cell adhesion"/>
    <property type="evidence" value="ECO:0000266"/>
    <property type="project" value="RGD"/>
</dbReference>
<dbReference type="GO" id="GO:0007417">
    <property type="term" value="P:central nervous system development"/>
    <property type="evidence" value="ECO:0000250"/>
    <property type="project" value="UniProtKB"/>
</dbReference>
<dbReference type="GO" id="GO:0045162">
    <property type="term" value="P:clustering of voltage-gated sodium channels"/>
    <property type="evidence" value="ECO:0000250"/>
    <property type="project" value="UniProtKB"/>
</dbReference>
<dbReference type="GO" id="GO:0070593">
    <property type="term" value="P:dendrite self-avoidance"/>
    <property type="evidence" value="ECO:0000318"/>
    <property type="project" value="GO_Central"/>
</dbReference>
<dbReference type="GO" id="GO:0007156">
    <property type="term" value="P:homophilic cell adhesion via plasma membrane adhesion molecules"/>
    <property type="evidence" value="ECO:0000318"/>
    <property type="project" value="GO_Central"/>
</dbReference>
<dbReference type="GO" id="GO:0019227">
    <property type="term" value="P:neuronal action potential propagation"/>
    <property type="evidence" value="ECO:0000266"/>
    <property type="project" value="RGD"/>
</dbReference>
<dbReference type="GO" id="GO:0008104">
    <property type="term" value="P:protein localization"/>
    <property type="evidence" value="ECO:0000266"/>
    <property type="project" value="RGD"/>
</dbReference>
<dbReference type="GO" id="GO:0010975">
    <property type="term" value="P:regulation of neuron projection development"/>
    <property type="evidence" value="ECO:0000266"/>
    <property type="project" value="RGD"/>
</dbReference>
<dbReference type="GO" id="GO:0099175">
    <property type="term" value="P:regulation of postsynapse organization"/>
    <property type="evidence" value="ECO:0000266"/>
    <property type="project" value="RGD"/>
</dbReference>
<dbReference type="GO" id="GO:0031290">
    <property type="term" value="P:retinal ganglion cell axon guidance"/>
    <property type="evidence" value="ECO:0000266"/>
    <property type="project" value="RGD"/>
</dbReference>
<dbReference type="CDD" id="cd00063">
    <property type="entry name" value="FN3"/>
    <property type="match status" value="4"/>
</dbReference>
<dbReference type="CDD" id="cd05874">
    <property type="entry name" value="IgI_NrCAM"/>
    <property type="match status" value="1"/>
</dbReference>
<dbReference type="FunFam" id="2.60.40.10:FF:000057">
    <property type="entry name" value="neural cell adhesion molecule L1"/>
    <property type="match status" value="1"/>
</dbReference>
<dbReference type="FunFam" id="2.60.40.10:FF:000363">
    <property type="entry name" value="neurofascin isoform X1"/>
    <property type="match status" value="1"/>
</dbReference>
<dbReference type="FunFam" id="2.60.40.10:FF:000005">
    <property type="entry name" value="Neuronal cell adhesion molecule"/>
    <property type="match status" value="1"/>
</dbReference>
<dbReference type="FunFam" id="2.60.40.10:FF:000038">
    <property type="entry name" value="Neuronal cell adhesion molecule"/>
    <property type="match status" value="1"/>
</dbReference>
<dbReference type="FunFam" id="2.60.40.10:FF:000078">
    <property type="entry name" value="Neuronal cell adhesion molecule"/>
    <property type="match status" value="1"/>
</dbReference>
<dbReference type="FunFam" id="2.60.40.10:FF:000114">
    <property type="entry name" value="Neuronal cell adhesion molecule"/>
    <property type="match status" value="1"/>
</dbReference>
<dbReference type="FunFam" id="2.60.40.10:FF:000238">
    <property type="entry name" value="Neuronal cell adhesion molecule"/>
    <property type="match status" value="1"/>
</dbReference>
<dbReference type="FunFam" id="2.60.40.10:FF:000347">
    <property type="entry name" value="Neuronal cell adhesion molecule"/>
    <property type="match status" value="1"/>
</dbReference>
<dbReference type="FunFam" id="2.60.40.10:FF:000100">
    <property type="entry name" value="Neuronal cell adhesion molecule a"/>
    <property type="match status" value="1"/>
</dbReference>
<dbReference type="FunFam" id="2.60.40.10:FF:000332">
    <property type="entry name" value="neuronal cell adhesion molecule isoform X2"/>
    <property type="match status" value="1"/>
</dbReference>
<dbReference type="Gene3D" id="2.60.40.10">
    <property type="entry name" value="Immunoglobulins"/>
    <property type="match status" value="10"/>
</dbReference>
<dbReference type="InterPro" id="IPR003961">
    <property type="entry name" value="FN3_dom"/>
</dbReference>
<dbReference type="InterPro" id="IPR036116">
    <property type="entry name" value="FN3_sf"/>
</dbReference>
<dbReference type="InterPro" id="IPR007110">
    <property type="entry name" value="Ig-like_dom"/>
</dbReference>
<dbReference type="InterPro" id="IPR036179">
    <property type="entry name" value="Ig-like_dom_sf"/>
</dbReference>
<dbReference type="InterPro" id="IPR013783">
    <property type="entry name" value="Ig-like_fold"/>
</dbReference>
<dbReference type="InterPro" id="IPR003006">
    <property type="entry name" value="Ig/MHC_CS"/>
</dbReference>
<dbReference type="InterPro" id="IPR013098">
    <property type="entry name" value="Ig_I-set"/>
</dbReference>
<dbReference type="InterPro" id="IPR003599">
    <property type="entry name" value="Ig_sub"/>
</dbReference>
<dbReference type="InterPro" id="IPR003598">
    <property type="entry name" value="Ig_sub2"/>
</dbReference>
<dbReference type="InterPro" id="IPR051170">
    <property type="entry name" value="Neural/epithelial_adhesion"/>
</dbReference>
<dbReference type="InterPro" id="IPR026966">
    <property type="entry name" value="Neurofascin/L1/NrCAM_C"/>
</dbReference>
<dbReference type="PANTHER" id="PTHR12231">
    <property type="entry name" value="CTX-RELATED TYPE I TRANSMEMBRANE PROTEIN"/>
    <property type="match status" value="1"/>
</dbReference>
<dbReference type="PANTHER" id="PTHR12231:SF257">
    <property type="entry name" value="NEURAL CELL ADHESION MOLECULE L1-LIKE PROTEIN"/>
    <property type="match status" value="1"/>
</dbReference>
<dbReference type="Pfam" id="PF13882">
    <property type="entry name" value="Bravo_FIGEY"/>
    <property type="match status" value="1"/>
</dbReference>
<dbReference type="Pfam" id="PF00041">
    <property type="entry name" value="fn3"/>
    <property type="match status" value="4"/>
</dbReference>
<dbReference type="Pfam" id="PF07679">
    <property type="entry name" value="I-set"/>
    <property type="match status" value="3"/>
</dbReference>
<dbReference type="Pfam" id="PF13927">
    <property type="entry name" value="Ig_3"/>
    <property type="match status" value="2"/>
</dbReference>
<dbReference type="SMART" id="SM00060">
    <property type="entry name" value="FN3"/>
    <property type="match status" value="4"/>
</dbReference>
<dbReference type="SMART" id="SM00409">
    <property type="entry name" value="IG"/>
    <property type="match status" value="6"/>
</dbReference>
<dbReference type="SMART" id="SM00408">
    <property type="entry name" value="IGc2"/>
    <property type="match status" value="6"/>
</dbReference>
<dbReference type="SUPFAM" id="SSF49265">
    <property type="entry name" value="Fibronectin type III"/>
    <property type="match status" value="2"/>
</dbReference>
<dbReference type="SUPFAM" id="SSF48726">
    <property type="entry name" value="Immunoglobulin"/>
    <property type="match status" value="6"/>
</dbReference>
<dbReference type="PROSITE" id="PS50853">
    <property type="entry name" value="FN3"/>
    <property type="match status" value="4"/>
</dbReference>
<dbReference type="PROSITE" id="PS50835">
    <property type="entry name" value="IG_LIKE"/>
    <property type="match status" value="6"/>
</dbReference>
<dbReference type="PROSITE" id="PS00290">
    <property type="entry name" value="IG_MHC"/>
    <property type="match status" value="1"/>
</dbReference>
<comment type="function">
    <text evidence="1 6">Cell adhesion protein that is required for normal responses to cell-cell contacts in brain and in the peripheral nervous system. Plays a role in neurite outgrowth in response to contactin binding. Plays a role in mediating cell-cell contacts between Schwann cells and axons (By similarity). Plays a role in the formation and maintenance of the nodes of Ranvier on myelinated axons (PubMed:16039564). Nodes of Ranvier contain clustered sodium channels that are crucial for the saltatory propagation of action potentials along myelinated axons. During development, nodes of Ranvier are formed by the fusion of two heminodes. Required for normal clustering of sodium channels at heminodes; not required for the formation of mature nodes with normal sodium channel clusters. Required, together with GLDN, for maintaining NFASC and sodium channel clusters at mature nodes of Ranvier.</text>
</comment>
<comment type="subunit">
    <text evidence="1 6">Constituent of a NFASC/NRCAM/ankyrin-G complex. Detected in a complex with CNTN1 and PTPRB. Interacts with MYOC (By similarity). Interacts with GLDN (PubMed:16039564).</text>
</comment>
<comment type="subcellular location">
    <subcellularLocation>
        <location evidence="9">Cell membrane</location>
        <topology evidence="1">Single-pass type I membrane protein</topology>
    </subcellularLocation>
    <subcellularLocation>
        <location evidence="7">Cell projection</location>
        <location evidence="7">Axon</location>
    </subcellularLocation>
    <subcellularLocation>
        <location evidence="1">Secreted</location>
    </subcellularLocation>
    <text evidence="7">Localized to axonal membranes at the node of Ranvier of myelinated axons (PubMed:8947556).</text>
</comment>
<comment type="alternative products">
    <event type="alternative splicing"/>
    <isoform>
        <id>P97686-1</id>
        <name>1</name>
        <sequence type="displayed"/>
    </isoform>
    <isoform>
        <id>P97686-2</id>
        <name>2</name>
        <name>Nr-CAM 22</name>
        <sequence type="described" ref="VSP_008932"/>
    </isoform>
    <isoform>
        <id>P97686-3</id>
        <name>3</name>
        <name>Nr-CAM 12</name>
        <sequence type="described" ref="VSP_008931 VSP_008933 VSP_008934"/>
    </isoform>
</comment>
<comment type="tissue specificity">
    <text evidence="7">Detected in cerebellum Purkinje cells. Detected on nodes of Ranvier and unmyelinated axons in sciatic nerve (at protein level).</text>
</comment>
<comment type="similarity">
    <text evidence="8">Belongs to the immunoglobulin superfamily. L1/neurofascin/NgCAM family.</text>
</comment>
<comment type="sequence caution" evidence="8">
    <conflict type="frameshift">
        <sequence resource="EMBL-CDS" id="AAB47755"/>
    </conflict>
</comment>
<accession>P97686</accession>
<organism>
    <name type="scientific">Rattus norvegicus</name>
    <name type="common">Rat</name>
    <dbReference type="NCBI Taxonomy" id="10116"/>
    <lineage>
        <taxon>Eukaryota</taxon>
        <taxon>Metazoa</taxon>
        <taxon>Chordata</taxon>
        <taxon>Craniata</taxon>
        <taxon>Vertebrata</taxon>
        <taxon>Euteleostomi</taxon>
        <taxon>Mammalia</taxon>
        <taxon>Eutheria</taxon>
        <taxon>Euarchontoglires</taxon>
        <taxon>Glires</taxon>
        <taxon>Rodentia</taxon>
        <taxon>Myomorpha</taxon>
        <taxon>Muroidea</taxon>
        <taxon>Muridae</taxon>
        <taxon>Murinae</taxon>
        <taxon>Rattus</taxon>
    </lineage>
</organism>
<proteinExistence type="evidence at protein level"/>
<name>NRCAM_RAT</name>
<feature type="signal peptide" evidence="2">
    <location>
        <begin position="1"/>
        <end position="29"/>
    </location>
</feature>
<feature type="chain" id="PRO_0000015059" description="Neuronal cell adhesion molecule">
    <location>
        <begin position="30"/>
        <end position="1214"/>
    </location>
</feature>
<feature type="topological domain" description="Extracellular" evidence="2">
    <location>
        <begin position="30"/>
        <end position="1077"/>
    </location>
</feature>
<feature type="transmembrane region" description="Helical" evidence="2">
    <location>
        <begin position="1078"/>
        <end position="1100"/>
    </location>
</feature>
<feature type="topological domain" description="Cytoplasmic" evidence="2">
    <location>
        <begin position="1101"/>
        <end position="1214"/>
    </location>
</feature>
<feature type="domain" description="Ig-like C2-type 1">
    <location>
        <begin position="46"/>
        <end position="134"/>
    </location>
</feature>
<feature type="domain" description="Ig-like C2-type 2">
    <location>
        <begin position="141"/>
        <end position="235"/>
    </location>
</feature>
<feature type="domain" description="Ig-like C2-type 3">
    <location>
        <begin position="267"/>
        <end position="356"/>
    </location>
</feature>
<feature type="domain" description="Ig-like C2-type 4">
    <location>
        <begin position="361"/>
        <end position="448"/>
    </location>
</feature>
<feature type="domain" description="Ig-like C2-type 5">
    <location>
        <begin position="454"/>
        <end position="541"/>
    </location>
</feature>
<feature type="domain" description="Ig-like C2-type 6">
    <location>
        <begin position="545"/>
        <end position="626"/>
    </location>
</feature>
<feature type="domain" description="Fibronectin type-III 1" evidence="4">
    <location>
        <begin position="649"/>
        <end position="744"/>
    </location>
</feature>
<feature type="domain" description="Fibronectin type-III 2" evidence="4">
    <location>
        <begin position="746"/>
        <end position="843"/>
    </location>
</feature>
<feature type="domain" description="Fibronectin type-III 3" evidence="4">
    <location>
        <begin position="848"/>
        <end position="950"/>
    </location>
</feature>
<feature type="domain" description="Fibronectin type-III 4" evidence="4">
    <location>
        <begin position="954"/>
        <end position="1051"/>
    </location>
</feature>
<feature type="region of interest" description="Disordered" evidence="5">
    <location>
        <begin position="1109"/>
        <end position="1214"/>
    </location>
</feature>
<feature type="compositionally biased region" description="Basic and acidic residues" evidence="5">
    <location>
        <begin position="1109"/>
        <end position="1129"/>
    </location>
</feature>
<feature type="compositionally biased region" description="Basic and acidic residues" evidence="5">
    <location>
        <begin position="1151"/>
        <end position="1160"/>
    </location>
</feature>
<feature type="compositionally biased region" description="Polar residues" evidence="5">
    <location>
        <begin position="1198"/>
        <end position="1214"/>
    </location>
</feature>
<feature type="modified residue" description="Phosphothreonine" evidence="11">
    <location>
        <position position="1131"/>
    </location>
</feature>
<feature type="modified residue" description="Phosphotyrosine" evidence="1">
    <location>
        <position position="1135"/>
    </location>
</feature>
<feature type="modified residue" description="Phosphoserine" evidence="11">
    <location>
        <position position="1136"/>
    </location>
</feature>
<feature type="modified residue" description="Phosphoserine" evidence="1">
    <location>
        <position position="1161"/>
    </location>
</feature>
<feature type="modified residue" description="Phosphoserine" evidence="1">
    <location>
        <position position="1164"/>
    </location>
</feature>
<feature type="modified residue" description="Phosphoserine" evidence="10">
    <location>
        <position position="1181"/>
    </location>
</feature>
<feature type="modified residue" description="Phosphoserine" evidence="11">
    <location>
        <position position="1200"/>
    </location>
</feature>
<feature type="modified residue" description="Phosphoserine" evidence="11">
    <location>
        <position position="1201"/>
    </location>
</feature>
<feature type="modified residue" description="Phosphoserine" evidence="11">
    <location>
        <position position="1205"/>
    </location>
</feature>
<feature type="glycosylation site" description="N-linked (GlcNAc...) asparagine" evidence="2">
    <location>
        <position position="83"/>
    </location>
</feature>
<feature type="glycosylation site" description="N-linked (GlcNAc...) asparagine" evidence="12">
    <location>
        <position position="223"/>
    </location>
</feature>
<feature type="glycosylation site" description="N-linked (GlcNAc...) asparagine" evidence="2">
    <location>
        <position position="245"/>
    </location>
</feature>
<feature type="glycosylation site" description="N-linked (GlcNAc...) asparagine" evidence="2">
    <location>
        <position position="251"/>
    </location>
</feature>
<feature type="glycosylation site" description="N-linked (GlcNAc...) asparagine" evidence="2">
    <location>
        <position position="276"/>
    </location>
</feature>
<feature type="glycosylation site" description="N-linked (GlcNAc...) asparagine" evidence="2">
    <location>
        <position position="314"/>
    </location>
</feature>
<feature type="glycosylation site" description="N-linked (GlcNAc...) asparagine" evidence="2">
    <location>
        <position position="377"/>
    </location>
</feature>
<feature type="glycosylation site" description="N-linked (GlcNAc...) asparagine" evidence="2">
    <location>
        <position position="433"/>
    </location>
</feature>
<feature type="glycosylation site" description="N-linked (GlcNAc...) asparagine" evidence="2">
    <location>
        <position position="507"/>
    </location>
</feature>
<feature type="glycosylation site" description="N-linked (GlcNAc...) asparagine" evidence="2">
    <location>
        <position position="619"/>
    </location>
</feature>
<feature type="glycosylation site" description="N-linked (GlcNAc...) asparagine" evidence="2">
    <location>
        <position position="716"/>
    </location>
</feature>
<feature type="glycosylation site" description="N-linked (GlcNAc...) asparagine" evidence="12">
    <location>
        <position position="802"/>
    </location>
</feature>
<feature type="glycosylation site" description="N-linked (GlcNAc...) asparagine" evidence="2">
    <location>
        <position position="858"/>
    </location>
</feature>
<feature type="glycosylation site" description="N-linked (GlcNAc...) asparagine" evidence="12">
    <location>
        <position position="993"/>
    </location>
</feature>
<feature type="glycosylation site" description="N-linked (GlcNAc...) asparagine" evidence="2">
    <location>
        <position position="1009"/>
    </location>
</feature>
<feature type="glycosylation site" description="N-linked (GlcNAc...) asparagine" evidence="2">
    <location>
        <position position="1019"/>
    </location>
</feature>
<feature type="disulfide bond" evidence="3">
    <location>
        <begin position="68"/>
        <end position="123"/>
    </location>
</feature>
<feature type="disulfide bond" evidence="3">
    <location>
        <begin position="167"/>
        <end position="218"/>
    </location>
</feature>
<feature type="disulfide bond" evidence="3">
    <location>
        <begin position="292"/>
        <end position="340"/>
    </location>
</feature>
<feature type="disulfide bond" evidence="3">
    <location>
        <begin position="382"/>
        <end position="432"/>
    </location>
</feature>
<feature type="disulfide bond" evidence="3">
    <location>
        <begin position="476"/>
        <end position="525"/>
    </location>
</feature>
<feature type="disulfide bond" evidence="3">
    <location>
        <begin position="567"/>
        <end position="616"/>
    </location>
</feature>
<feature type="splice variant" id="VSP_008931" description="In isoform 3." evidence="8">
    <location>
        <begin position="36"/>
        <end position="41"/>
    </location>
</feature>
<feature type="splice variant" id="VSP_008932" description="In isoform 2." evidence="8">
    <location>
        <begin position="241"/>
        <end position="259"/>
    </location>
</feature>
<feature type="splice variant" id="VSP_008933" description="In isoform 3." evidence="8">
    <location>
        <begin position="635"/>
        <end position="644"/>
    </location>
</feature>
<feature type="splice variant" id="VSP_008934" description="In isoform 3." evidence="8">
    <location>
        <begin position="1051"/>
        <end position="1065"/>
    </location>
</feature>
<gene>
    <name type="primary">Nrcam</name>
</gene>
<keyword id="KW-0025">Alternative splicing</keyword>
<keyword id="KW-0130">Cell adhesion</keyword>
<keyword id="KW-1003">Cell membrane</keyword>
<keyword id="KW-0966">Cell projection</keyword>
<keyword id="KW-1015">Disulfide bond</keyword>
<keyword id="KW-0325">Glycoprotein</keyword>
<keyword id="KW-0393">Immunoglobulin domain</keyword>
<keyword id="KW-0472">Membrane</keyword>
<keyword id="KW-0597">Phosphoprotein</keyword>
<keyword id="KW-1185">Reference proteome</keyword>
<keyword id="KW-0677">Repeat</keyword>
<keyword id="KW-0964">Secreted</keyword>
<keyword id="KW-0732">Signal</keyword>
<keyword id="KW-0812">Transmembrane</keyword>
<keyword id="KW-1133">Transmembrane helix</keyword>
<sequence>MQLKTMPKKKPLSAGRAPLFLFLCQMISALDVPLDPKLLDDLVQPPTITQQSPKDYIIDPRENIVIQCEAKGKPPPSFSWTRNGTHFDIDKDPLVTMKPGSGTLVINIMSEGKAETYEGVYQCTARNERGAAVSNNIVVRPSRSPLWTKERLEPIILRSGQSLVLPCRPPIGLPPAIIFWMDNSFQRLPQSERVSQGLNGDLYFSNVLPEDTREDYICYARFNHTQTIQQKQPISLKVISVDELNDTIAANLSDTEFYGAKSSKERPPTFLTPEGNESHKEELRGNVLSLECIAEGLPTPVIYWIKEDGTLPVNRTFYRNFKKTLQIIHVSEADSGNYQCIAKNALGAVHHTISVTVKAAPYWIVAPHNLVLSPGENGTLICRANGNPKPRISWLTNGVPVEIALDDPSRKIDGDTIMFSNVQESSSAVYQCNASNKYGYLLANAFVNVLAEPPRILTSANTLYQVIANRPALLDCAFFGSPMPTIEWFKGTKGSALHEDIYVLHDNGTLEIPVAQKDSTGTYTCVARNKLGMAKNEVHLEIKDPTRFIKQPGYAVVQRGSKVSFECKVKHDHTLIPTILWLKDNGELPNDERFSVDKDHLVVSDVKDEDGGTYTCAANTTLDSVSASAVLRVVAPTPTPAPIYDVPNPPFDLELTNQLDKSVQLTWTPGDDNNSPITKFIIEYEDAMHEAGLWRHQAEVSGTQTTAQLKLSPYVNYSFRVMAENSIGRSVPSEASEQYLTKAAEPDQNPTAVEGLGTEPDNLVITWKPLNGFQSNGPGLQYKVSWRQKDGDDEWTSVVVANVSKYIVSGTPTFVPYLIKVQALNDVGFAPEPAAVMGHSGEDLPMVAPGNVRVSVVNSTLAEAHWDPVPPKSVRGHLQGYRIYYWKAQSSSKRNRRHIEKKILTFQGSKTHGMLPGLQPYSHYVLNVRVVNGKGEGPASADRGFHTPEGVPSAPSSLKIVNPTLDSLTLEWDPPSHPNGILTEYILKYQPINSTHELGPLVDLKIPANKTRWTLKNLNFSTRYKFYFYAQTSVGSGSQITEEAITTVDEGKKAGILPPDVGAGKAMASRQVDIATQGWFIGLMCAVALLILILLIVCFIRRNKGGKYPVKEKEDAHADPEIQPMKEDDGTFGEYSDAEDHKPLKKGSRTPSDRTVKKEDSDDSLVDYGEGVNGQFNEDGSFIGQYSGKKEKEPAEGNESSEAPSPVNAMNSFV</sequence>
<evidence type="ECO:0000250" key="1">
    <source>
        <dbReference type="UniProtKB" id="Q810U4"/>
    </source>
</evidence>
<evidence type="ECO:0000255" key="2"/>
<evidence type="ECO:0000255" key="3">
    <source>
        <dbReference type="PROSITE-ProRule" id="PRU00114"/>
    </source>
</evidence>
<evidence type="ECO:0000255" key="4">
    <source>
        <dbReference type="PROSITE-ProRule" id="PRU00316"/>
    </source>
</evidence>
<evidence type="ECO:0000256" key="5">
    <source>
        <dbReference type="SAM" id="MobiDB-lite"/>
    </source>
</evidence>
<evidence type="ECO:0000269" key="6">
    <source>
    </source>
</evidence>
<evidence type="ECO:0000269" key="7">
    <source>
    </source>
</evidence>
<evidence type="ECO:0000305" key="8"/>
<evidence type="ECO:0000305" key="9">
    <source>
    </source>
</evidence>
<evidence type="ECO:0007744" key="10">
    <source>
    </source>
</evidence>
<evidence type="ECO:0007744" key="11">
    <source>
    </source>
</evidence>
<evidence type="ECO:0007744" key="12">
    <source>
    </source>
</evidence>
<protein>
    <recommendedName>
        <fullName>Neuronal cell adhesion molecule</fullName>
        <shortName>Nr-CAM</shortName>
    </recommendedName>
    <alternativeName>
        <fullName>Ankyrin-binding cell adhesion molecule NrCAM</fullName>
    </alternativeName>
    <alternativeName>
        <fullName>Neuronal surface protein Bravo</fullName>
        <shortName>rBravo</shortName>
    </alternativeName>
    <alternativeName>
        <fullName>NgCAM-related cell adhesion molecule</fullName>
        <shortName>Ng-CAM-related</shortName>
    </alternativeName>
</protein>
<reference key="1">
    <citation type="journal article" date="1996" name="J. Cell Biol.">
        <title>Molecular composition of the node of Ranvier: identification of ankyrin-binding cell adhesion molecules neurofascin (mucin+/third FNIII domain-) and NrCAM at nodal axon segments.</title>
        <authorList>
            <person name="Davis J.Q."/>
            <person name="Lambert S."/>
            <person name="Bennett V."/>
        </authorList>
    </citation>
    <scope>NUCLEOTIDE SEQUENCE [MRNA] (ISOFORM 1)</scope>
    <scope>NUCLEOTIDE SEQUENCE OF 30-1214 (ISOFORMS 2 AND 3)</scope>
    <scope>CHARACTERIZATION</scope>
    <scope>SUBCELLULAR LOCATION</scope>
    <scope>TISSUE SPECIFICITY</scope>
    <source>
        <tissue>Brain</tissue>
    </source>
</reference>
<reference key="2">
    <citation type="journal article" date="2005" name="Neuron">
        <title>Gliomedin mediates Schwann cell-axon interaction and the molecular assembly of the nodes of Ranvier.</title>
        <authorList>
            <person name="Eshed Y."/>
            <person name="Feinberg K."/>
            <person name="Poliak S."/>
            <person name="Sabanay H."/>
            <person name="Sarig-Nadir O."/>
            <person name="Spiegel I."/>
            <person name="Bermingham J.R. Jr."/>
            <person name="Peles E."/>
        </authorList>
    </citation>
    <scope>FUNCTION</scope>
    <scope>INTERACTION WITH GLDN</scope>
</reference>
<reference key="3">
    <citation type="journal article" date="2006" name="Proc. Natl. Acad. Sci. U.S.A.">
        <title>Quantitative phosphoproteomics of vasopressin-sensitive renal cells: regulation of aquaporin-2 phosphorylation at two sites.</title>
        <authorList>
            <person name="Hoffert J.D."/>
            <person name="Pisitkun T."/>
            <person name="Wang G."/>
            <person name="Shen R.-F."/>
            <person name="Knepper M.A."/>
        </authorList>
    </citation>
    <scope>PHOSPHORYLATION [LARGE SCALE ANALYSIS] AT SER-1181</scope>
    <scope>IDENTIFICATION BY MASS SPECTROMETRY [LARGE SCALE ANALYSIS]</scope>
</reference>
<reference key="4">
    <citation type="journal article" date="2012" name="Nat. Commun.">
        <title>Quantitative maps of protein phosphorylation sites across 14 different rat organs and tissues.</title>
        <authorList>
            <person name="Lundby A."/>
            <person name="Secher A."/>
            <person name="Lage K."/>
            <person name="Nordsborg N.B."/>
            <person name="Dmytriyev A."/>
            <person name="Lundby C."/>
            <person name="Olsen J.V."/>
        </authorList>
    </citation>
    <scope>PHOSPHORYLATION [LARGE SCALE ANALYSIS] AT THR-1131; SER-1136; SER-1200; SER-1201 AND SER-1205</scope>
    <scope>IDENTIFICATION BY MASS SPECTROMETRY [LARGE SCALE ANALYSIS]</scope>
</reference>
<reference key="5">
    <citation type="journal article" date="2013" name="J. Proteome Res.">
        <title>Site-specific glycan-peptide analysis for determination of N-glycoproteome heterogeneity.</title>
        <authorList>
            <person name="Parker B.L."/>
            <person name="Thaysen-Andersen M."/>
            <person name="Solis N."/>
            <person name="Scott N.E."/>
            <person name="Larsen M.R."/>
            <person name="Graham M.E."/>
            <person name="Packer N.H."/>
            <person name="Cordwell S.J."/>
        </authorList>
    </citation>
    <scope>GLYCOSYLATION [LARGE SCALE ANALYSIS] AT ASN-223; ASN-802 AND ASN-993</scope>
    <scope>IDENTIFICATION BY MASS SPECTROMETRY [LARGE SCALE ANALYSIS]</scope>
    <source>
        <tissue>Brain</tissue>
    </source>
</reference>